<reference key="1">
    <citation type="journal article" date="2008" name="BMC Genomics">
        <title>The missing link: Bordetella petrii is endowed with both the metabolic versatility of environmental bacteria and virulence traits of pathogenic Bordetellae.</title>
        <authorList>
            <person name="Gross R."/>
            <person name="Guzman C.A."/>
            <person name="Sebaihia M."/>
            <person name="Martin dos Santos V.A.P."/>
            <person name="Pieper D.H."/>
            <person name="Koebnik R."/>
            <person name="Lechner M."/>
            <person name="Bartels D."/>
            <person name="Buhrmester J."/>
            <person name="Choudhuri J.V."/>
            <person name="Ebensen T."/>
            <person name="Gaigalat L."/>
            <person name="Herrmann S."/>
            <person name="Khachane A.N."/>
            <person name="Larisch C."/>
            <person name="Link S."/>
            <person name="Linke B."/>
            <person name="Meyer F."/>
            <person name="Mormann S."/>
            <person name="Nakunst D."/>
            <person name="Rueckert C."/>
            <person name="Schneiker-Bekel S."/>
            <person name="Schulze K."/>
            <person name="Voerholter F.-J."/>
            <person name="Yevsa T."/>
            <person name="Engle J.T."/>
            <person name="Goldman W.E."/>
            <person name="Puehler A."/>
            <person name="Goebel U.B."/>
            <person name="Goesmann A."/>
            <person name="Bloecker H."/>
            <person name="Kaiser O."/>
            <person name="Martinez-Arias R."/>
        </authorList>
    </citation>
    <scope>NUCLEOTIDE SEQUENCE [LARGE SCALE GENOMIC DNA]</scope>
    <source>
        <strain>ATCC BAA-461 / DSM 12804 / CCUG 43448</strain>
    </source>
</reference>
<accession>A9HZF7</accession>
<organism>
    <name type="scientific">Bordetella petrii (strain ATCC BAA-461 / DSM 12804 / CCUG 43448)</name>
    <dbReference type="NCBI Taxonomy" id="340100"/>
    <lineage>
        <taxon>Bacteria</taxon>
        <taxon>Pseudomonadati</taxon>
        <taxon>Pseudomonadota</taxon>
        <taxon>Betaproteobacteria</taxon>
        <taxon>Burkholderiales</taxon>
        <taxon>Alcaligenaceae</taxon>
        <taxon>Bordetella</taxon>
    </lineage>
</organism>
<dbReference type="EC" id="6.3.2.6" evidence="1"/>
<dbReference type="EMBL" id="AM902716">
    <property type="protein sequence ID" value="CAP43941.1"/>
    <property type="molecule type" value="Genomic_DNA"/>
</dbReference>
<dbReference type="SMR" id="A9HZF7"/>
<dbReference type="STRING" id="94624.Bpet3598"/>
<dbReference type="KEGG" id="bpt:Bpet3598"/>
<dbReference type="eggNOG" id="COG0152">
    <property type="taxonomic scope" value="Bacteria"/>
</dbReference>
<dbReference type="UniPathway" id="UPA00074">
    <property type="reaction ID" value="UER00131"/>
</dbReference>
<dbReference type="Proteomes" id="UP000001225">
    <property type="component" value="Chromosome"/>
</dbReference>
<dbReference type="GO" id="GO:0005737">
    <property type="term" value="C:cytoplasm"/>
    <property type="evidence" value="ECO:0007669"/>
    <property type="project" value="TreeGrafter"/>
</dbReference>
<dbReference type="GO" id="GO:0005524">
    <property type="term" value="F:ATP binding"/>
    <property type="evidence" value="ECO:0007669"/>
    <property type="project" value="UniProtKB-KW"/>
</dbReference>
<dbReference type="GO" id="GO:0004639">
    <property type="term" value="F:phosphoribosylaminoimidazolesuccinocarboxamide synthase activity"/>
    <property type="evidence" value="ECO:0007669"/>
    <property type="project" value="UniProtKB-UniRule"/>
</dbReference>
<dbReference type="GO" id="GO:0006189">
    <property type="term" value="P:'de novo' IMP biosynthetic process"/>
    <property type="evidence" value="ECO:0007669"/>
    <property type="project" value="UniProtKB-UniRule"/>
</dbReference>
<dbReference type="CDD" id="cd01414">
    <property type="entry name" value="SAICAR_synt_Sc"/>
    <property type="match status" value="1"/>
</dbReference>
<dbReference type="FunFam" id="3.30.470.20:FF:000015">
    <property type="entry name" value="Phosphoribosylaminoimidazole-succinocarboxamide synthase"/>
    <property type="match status" value="1"/>
</dbReference>
<dbReference type="Gene3D" id="3.30.470.20">
    <property type="entry name" value="ATP-grasp fold, B domain"/>
    <property type="match status" value="1"/>
</dbReference>
<dbReference type="Gene3D" id="3.30.200.20">
    <property type="entry name" value="Phosphorylase Kinase, domain 1"/>
    <property type="match status" value="1"/>
</dbReference>
<dbReference type="HAMAP" id="MF_00137">
    <property type="entry name" value="SAICAR_synth"/>
    <property type="match status" value="1"/>
</dbReference>
<dbReference type="InterPro" id="IPR028923">
    <property type="entry name" value="SAICAR_synt/ADE2_N"/>
</dbReference>
<dbReference type="InterPro" id="IPR001636">
    <property type="entry name" value="SAICAR_synth"/>
</dbReference>
<dbReference type="InterPro" id="IPR018236">
    <property type="entry name" value="SAICAR_synthetase_CS"/>
</dbReference>
<dbReference type="NCBIfam" id="NF010568">
    <property type="entry name" value="PRK13961.1"/>
    <property type="match status" value="1"/>
</dbReference>
<dbReference type="NCBIfam" id="TIGR00081">
    <property type="entry name" value="purC"/>
    <property type="match status" value="1"/>
</dbReference>
<dbReference type="PANTHER" id="PTHR43700">
    <property type="entry name" value="PHOSPHORIBOSYLAMINOIMIDAZOLE-SUCCINOCARBOXAMIDE SYNTHASE"/>
    <property type="match status" value="1"/>
</dbReference>
<dbReference type="PANTHER" id="PTHR43700:SF1">
    <property type="entry name" value="PHOSPHORIBOSYLAMINOIMIDAZOLE-SUCCINOCARBOXAMIDE SYNTHASE"/>
    <property type="match status" value="1"/>
</dbReference>
<dbReference type="Pfam" id="PF01259">
    <property type="entry name" value="SAICAR_synt"/>
    <property type="match status" value="1"/>
</dbReference>
<dbReference type="SUPFAM" id="SSF56104">
    <property type="entry name" value="SAICAR synthase-like"/>
    <property type="match status" value="1"/>
</dbReference>
<dbReference type="PROSITE" id="PS01057">
    <property type="entry name" value="SAICAR_SYNTHETASE_1"/>
    <property type="match status" value="1"/>
</dbReference>
<dbReference type="PROSITE" id="PS01058">
    <property type="entry name" value="SAICAR_SYNTHETASE_2"/>
    <property type="match status" value="1"/>
</dbReference>
<evidence type="ECO:0000255" key="1">
    <source>
        <dbReference type="HAMAP-Rule" id="MF_00137"/>
    </source>
</evidence>
<comment type="catalytic activity">
    <reaction evidence="1">
        <text>5-amino-1-(5-phospho-D-ribosyl)imidazole-4-carboxylate + L-aspartate + ATP = (2S)-2-[5-amino-1-(5-phospho-beta-D-ribosyl)imidazole-4-carboxamido]succinate + ADP + phosphate + 2 H(+)</text>
        <dbReference type="Rhea" id="RHEA:22628"/>
        <dbReference type="ChEBI" id="CHEBI:15378"/>
        <dbReference type="ChEBI" id="CHEBI:29991"/>
        <dbReference type="ChEBI" id="CHEBI:30616"/>
        <dbReference type="ChEBI" id="CHEBI:43474"/>
        <dbReference type="ChEBI" id="CHEBI:58443"/>
        <dbReference type="ChEBI" id="CHEBI:77657"/>
        <dbReference type="ChEBI" id="CHEBI:456216"/>
        <dbReference type="EC" id="6.3.2.6"/>
    </reaction>
</comment>
<comment type="pathway">
    <text evidence="1">Purine metabolism; IMP biosynthesis via de novo pathway; 5-amino-1-(5-phospho-D-ribosyl)imidazole-4-carboxamide from 5-amino-1-(5-phospho-D-ribosyl)imidazole-4-carboxylate: step 1/2.</text>
</comment>
<comment type="similarity">
    <text evidence="1">Belongs to the SAICAR synthetase family.</text>
</comment>
<gene>
    <name evidence="1" type="primary">purC</name>
    <name type="ordered locus">Bpet3598</name>
</gene>
<keyword id="KW-0067">ATP-binding</keyword>
<keyword id="KW-0436">Ligase</keyword>
<keyword id="KW-0547">Nucleotide-binding</keyword>
<keyword id="KW-0658">Purine biosynthesis</keyword>
<feature type="chain" id="PRO_1000095966" description="Phosphoribosylaminoimidazole-succinocarboxamide synthase">
    <location>
        <begin position="1"/>
        <end position="293"/>
    </location>
</feature>
<proteinExistence type="inferred from homology"/>
<protein>
    <recommendedName>
        <fullName evidence="1">Phosphoribosylaminoimidazole-succinocarboxamide synthase</fullName>
        <ecNumber evidence="1">6.3.2.6</ecNumber>
    </recommendedName>
    <alternativeName>
        <fullName evidence="1">SAICAR synthetase</fullName>
    </alternativeName>
</protein>
<name>PUR7_BORPD</name>
<sequence length="293" mass="32421">MTSALHQSSIKSLPLLGRGKVRDMYAVGDDKLLIVASDRISAFDVILDDPIPGKGQVLTELTEFWLNKLAHILPNHSTGVRPEDVVAPDELDQVRGRAVVVKRLKPILVEAVARGYLIGSGWKDYQATGAVCGIALPAGLQQASKLPQPIFTPAAKAEFGMHDENVDFAHVVREVGQEMAERIRDVTLRLYTEAAQFAATKGIIIADTKFEFGLDDDGTLYLMDEVLTPDSSRFWPADGYRVGISPPSFDKQFVRDWLETQDWDKTPPAPRLPQEVLQKTAAKYREALDRLVA</sequence>